<feature type="chain" id="PRO_0000122253" description="Small ribosomal subunit protein eS8">
    <location>
        <begin position="1"/>
        <end position="221"/>
    </location>
</feature>
<feature type="region of interest" description="Disordered" evidence="1">
    <location>
        <begin position="1"/>
        <end position="41"/>
    </location>
</feature>
<feature type="region of interest" description="Disordered" evidence="1">
    <location>
        <begin position="128"/>
        <end position="169"/>
    </location>
</feature>
<feature type="compositionally biased region" description="Basic residues" evidence="1">
    <location>
        <begin position="8"/>
        <end position="26"/>
    </location>
</feature>
<feature type="compositionally biased region" description="Basic and acidic residues" evidence="1">
    <location>
        <begin position="146"/>
        <end position="169"/>
    </location>
</feature>
<keyword id="KW-1185">Reference proteome</keyword>
<keyword id="KW-0687">Ribonucleoprotein</keyword>
<keyword id="KW-0689">Ribosomal protein</keyword>
<evidence type="ECO:0000256" key="1">
    <source>
        <dbReference type="SAM" id="MobiDB-lite"/>
    </source>
</evidence>
<evidence type="ECO:0000305" key="2"/>
<organism>
    <name type="scientific">Zea mays</name>
    <name type="common">Maize</name>
    <dbReference type="NCBI Taxonomy" id="4577"/>
    <lineage>
        <taxon>Eukaryota</taxon>
        <taxon>Viridiplantae</taxon>
        <taxon>Streptophyta</taxon>
        <taxon>Embryophyta</taxon>
        <taxon>Tracheophyta</taxon>
        <taxon>Spermatophyta</taxon>
        <taxon>Magnoliopsida</taxon>
        <taxon>Liliopsida</taxon>
        <taxon>Poales</taxon>
        <taxon>Poaceae</taxon>
        <taxon>PACMAD clade</taxon>
        <taxon>Panicoideae</taxon>
        <taxon>Andropogonodae</taxon>
        <taxon>Andropogoneae</taxon>
        <taxon>Tripsacinae</taxon>
        <taxon>Zea</taxon>
    </lineage>
</organism>
<name>RS8_MAIZE</name>
<protein>
    <recommendedName>
        <fullName evidence="2">Small ribosomal subunit protein eS8</fullName>
    </recommendedName>
    <alternativeName>
        <fullName>40S ribosomal protein S8</fullName>
    </alternativeName>
</protein>
<proteinExistence type="evidence at transcript level"/>
<reference key="1">
    <citation type="submission" date="1996-07" db="EMBL/GenBank/DDBJ databases">
        <authorList>
            <person name="Betawar N.M."/>
            <person name="Baysdorfer C."/>
        </authorList>
    </citation>
    <scope>NUCLEOTIDE SEQUENCE [MRNA]</scope>
    <source>
        <strain>cv. B73</strain>
    </source>
</reference>
<reference key="2">
    <citation type="journal article" date="1993" name="Plant Physiol.">
        <title>Partial sequence analysis of 130 randomly selected maize cDNA clones.</title>
        <authorList>
            <person name="Keith C.S."/>
            <person name="Hoang D.O."/>
            <person name="Barrett B.M."/>
            <person name="Feigelman B."/>
            <person name="Nelson M.C."/>
            <person name="Thai H."/>
            <person name="Baysdorfer C."/>
        </authorList>
    </citation>
    <scope>NUCLEOTIDE SEQUENCE [MRNA] OF 1-41</scope>
</reference>
<sequence>MGISRDSMHKRRATGGKQKAWRKKRKYELGRQPANTKLSSNKTVRRVRVRGGNVKWRALRLDTGNYSWGSEAVTRKTRILDVVYNASNNELVRTQTLVKSAIVQVDAAPFKQWYLTHYGVDIGRKKKTPAAKKDNAEGQEVEAAAEETKKSNHVTRKLEKRKEGRTLDPHIEEQFGSGRLLACISSRPGQCGRADGYILEGKELEFYMKKLQRKKGKSAVA</sequence>
<comment type="similarity">
    <text evidence="2">Belongs to the eukaryotic ribosomal protein eS8 family.</text>
</comment>
<accession>Q08069</accession>
<dbReference type="EMBL" id="U64436">
    <property type="protein sequence ID" value="AAB06330.1"/>
    <property type="molecule type" value="mRNA"/>
</dbReference>
<dbReference type="EMBL" id="M95064">
    <property type="protein sequence ID" value="AAA18551.2"/>
    <property type="molecule type" value="mRNA"/>
</dbReference>
<dbReference type="PIR" id="T03647">
    <property type="entry name" value="T03647"/>
</dbReference>
<dbReference type="PIR" id="T04088">
    <property type="entry name" value="T04088"/>
</dbReference>
<dbReference type="RefSeq" id="NP_001105391.1">
    <property type="nucleotide sequence ID" value="NM_001111921.1"/>
</dbReference>
<dbReference type="RefSeq" id="XP_008679877.1">
    <property type="nucleotide sequence ID" value="XM_008681655.1"/>
</dbReference>
<dbReference type="SMR" id="Q08069"/>
<dbReference type="FunCoup" id="Q08069">
    <property type="interactions" value="2242"/>
</dbReference>
<dbReference type="STRING" id="4577.Q08069"/>
<dbReference type="PaxDb" id="4577-GRMZM2G030228_P01"/>
<dbReference type="ProMEX" id="Q08069"/>
<dbReference type="EnsemblPlants" id="Zm00001eb205630_T001">
    <property type="protein sequence ID" value="Zm00001eb205630_P001"/>
    <property type="gene ID" value="Zm00001eb205630"/>
</dbReference>
<dbReference type="EnsemblPlants" id="Zm00001eb205660_T001">
    <property type="protein sequence ID" value="Zm00001eb205660_P001"/>
    <property type="gene ID" value="Zm00001eb205660"/>
</dbReference>
<dbReference type="EnsemblPlants" id="Zm00001eb205670_T001">
    <property type="protein sequence ID" value="Zm00001eb205670_P001"/>
    <property type="gene ID" value="Zm00001eb205670"/>
</dbReference>
<dbReference type="EnsemblPlants" id="Zm00001eb205700_T001">
    <property type="protein sequence ID" value="Zm00001eb205700_P001"/>
    <property type="gene ID" value="Zm00001eb205700"/>
</dbReference>
<dbReference type="EnsemblPlants" id="Zm00001eb205710_T002">
    <property type="protein sequence ID" value="Zm00001eb205710_P002"/>
    <property type="gene ID" value="Zm00001eb205710"/>
</dbReference>
<dbReference type="GeneID" id="542341"/>
<dbReference type="Gramene" id="Zm00001eb205630_T001">
    <property type="protein sequence ID" value="Zm00001eb205630_P001"/>
    <property type="gene ID" value="Zm00001eb205630"/>
</dbReference>
<dbReference type="Gramene" id="Zm00001eb205660_T001">
    <property type="protein sequence ID" value="Zm00001eb205660_P001"/>
    <property type="gene ID" value="Zm00001eb205660"/>
</dbReference>
<dbReference type="Gramene" id="Zm00001eb205670_T001">
    <property type="protein sequence ID" value="Zm00001eb205670_P001"/>
    <property type="gene ID" value="Zm00001eb205670"/>
</dbReference>
<dbReference type="Gramene" id="Zm00001eb205700_T001">
    <property type="protein sequence ID" value="Zm00001eb205700_P001"/>
    <property type="gene ID" value="Zm00001eb205700"/>
</dbReference>
<dbReference type="Gramene" id="Zm00001eb205710_T002">
    <property type="protein sequence ID" value="Zm00001eb205710_P002"/>
    <property type="gene ID" value="Zm00001eb205710"/>
</dbReference>
<dbReference type="KEGG" id="zma:103654826"/>
<dbReference type="KEGG" id="zma:103654828"/>
<dbReference type="KEGG" id="zma:542341"/>
<dbReference type="MaizeGDB" id="25471"/>
<dbReference type="eggNOG" id="KOG3283">
    <property type="taxonomic scope" value="Eukaryota"/>
</dbReference>
<dbReference type="HOGENOM" id="CLU_080597_1_1_1"/>
<dbReference type="InParanoid" id="Q08069"/>
<dbReference type="OMA" id="QRPHYRK"/>
<dbReference type="OrthoDB" id="1703270at2759"/>
<dbReference type="Proteomes" id="UP000007305">
    <property type="component" value="Chromosome 4"/>
</dbReference>
<dbReference type="ExpressionAtlas" id="Q08069">
    <property type="expression patterns" value="baseline and differential"/>
</dbReference>
<dbReference type="GO" id="GO:0043253">
    <property type="term" value="C:chloroplast ribosome"/>
    <property type="evidence" value="ECO:0000303"/>
    <property type="project" value="AgBase"/>
</dbReference>
<dbReference type="GO" id="GO:0022627">
    <property type="term" value="C:cytosolic small ribosomal subunit"/>
    <property type="evidence" value="ECO:0000318"/>
    <property type="project" value="GO_Central"/>
</dbReference>
<dbReference type="GO" id="GO:0003735">
    <property type="term" value="F:structural constituent of ribosome"/>
    <property type="evidence" value="ECO:0000318"/>
    <property type="project" value="GO_Central"/>
</dbReference>
<dbReference type="GO" id="GO:0000462">
    <property type="term" value="P:maturation of SSU-rRNA from tricistronic rRNA transcript (SSU-rRNA, 5.8S rRNA, LSU-rRNA)"/>
    <property type="evidence" value="ECO:0000318"/>
    <property type="project" value="GO_Central"/>
</dbReference>
<dbReference type="GO" id="GO:0042255">
    <property type="term" value="P:ribosome assembly"/>
    <property type="evidence" value="ECO:0000304"/>
    <property type="project" value="AgBase"/>
</dbReference>
<dbReference type="GO" id="GO:0006412">
    <property type="term" value="P:translation"/>
    <property type="evidence" value="ECO:0007669"/>
    <property type="project" value="InterPro"/>
</dbReference>
<dbReference type="CDD" id="cd11380">
    <property type="entry name" value="Ribosomal_S8e_like"/>
    <property type="match status" value="1"/>
</dbReference>
<dbReference type="FunFam" id="1.10.168.20:FF:000002">
    <property type="entry name" value="40S ribosomal protein S8"/>
    <property type="match status" value="1"/>
</dbReference>
<dbReference type="FunFam" id="3.10.290.70:FF:000002">
    <property type="entry name" value="40S ribosomal protein S8"/>
    <property type="match status" value="1"/>
</dbReference>
<dbReference type="FunFam" id="3.10.290.70:FF:000003">
    <property type="entry name" value="40S ribosomal protein S8"/>
    <property type="match status" value="1"/>
</dbReference>
<dbReference type="Gene3D" id="3.10.290.70">
    <property type="match status" value="2"/>
</dbReference>
<dbReference type="InterPro" id="IPR001047">
    <property type="entry name" value="Ribosomal_eS8"/>
</dbReference>
<dbReference type="InterPro" id="IPR018283">
    <property type="entry name" value="Ribosomal_eS8_CS"/>
</dbReference>
<dbReference type="InterPro" id="IPR022309">
    <property type="entry name" value="Ribosomal_Se8/biogenesis_NSA2"/>
</dbReference>
<dbReference type="NCBIfam" id="TIGR00307">
    <property type="entry name" value="eS8"/>
    <property type="match status" value="1"/>
</dbReference>
<dbReference type="PANTHER" id="PTHR10394">
    <property type="entry name" value="40S RIBOSOMAL PROTEIN S8"/>
    <property type="match status" value="1"/>
</dbReference>
<dbReference type="Pfam" id="PF01201">
    <property type="entry name" value="Ribosomal_S8e"/>
    <property type="match status" value="1"/>
</dbReference>
<dbReference type="PROSITE" id="PS01193">
    <property type="entry name" value="RIBOSOMAL_S8E"/>
    <property type="match status" value="1"/>
</dbReference>
<gene>
    <name type="primary">RPS8</name>
</gene>